<sequence>MARSLKKGPFVDDHLMSKIAKLNETEQKQVVKTWSRRSTIFPQFIGHTIAVYDGRKHVPVYVTEDMVGHKLGEFAPTRTYKGHDADDKKTRR</sequence>
<accession>Q63H86</accession>
<name>RS19_BACCZ</name>
<feature type="chain" id="PRO_0000129774" description="Small ribosomal subunit protein uS19">
    <location>
        <begin position="1"/>
        <end position="92"/>
    </location>
</feature>
<gene>
    <name evidence="1" type="primary">rpsS</name>
    <name type="ordered locus">BCE33L0108</name>
</gene>
<dbReference type="EMBL" id="CP000001">
    <property type="protein sequence ID" value="AAU20121.1"/>
    <property type="molecule type" value="Genomic_DNA"/>
</dbReference>
<dbReference type="RefSeq" id="WP_000124453.1">
    <property type="nucleotide sequence ID" value="NZ_CP009968.1"/>
</dbReference>
<dbReference type="SMR" id="Q63H86"/>
<dbReference type="GeneID" id="93010939"/>
<dbReference type="KEGG" id="bcz:BCE33L0108"/>
<dbReference type="PATRIC" id="fig|288681.22.peg.43"/>
<dbReference type="Proteomes" id="UP000002612">
    <property type="component" value="Chromosome"/>
</dbReference>
<dbReference type="GO" id="GO:0005737">
    <property type="term" value="C:cytoplasm"/>
    <property type="evidence" value="ECO:0007669"/>
    <property type="project" value="UniProtKB-ARBA"/>
</dbReference>
<dbReference type="GO" id="GO:0015935">
    <property type="term" value="C:small ribosomal subunit"/>
    <property type="evidence" value="ECO:0007669"/>
    <property type="project" value="InterPro"/>
</dbReference>
<dbReference type="GO" id="GO:0019843">
    <property type="term" value="F:rRNA binding"/>
    <property type="evidence" value="ECO:0007669"/>
    <property type="project" value="UniProtKB-UniRule"/>
</dbReference>
<dbReference type="GO" id="GO:0003735">
    <property type="term" value="F:structural constituent of ribosome"/>
    <property type="evidence" value="ECO:0007669"/>
    <property type="project" value="InterPro"/>
</dbReference>
<dbReference type="GO" id="GO:0000028">
    <property type="term" value="P:ribosomal small subunit assembly"/>
    <property type="evidence" value="ECO:0007669"/>
    <property type="project" value="TreeGrafter"/>
</dbReference>
<dbReference type="GO" id="GO:0006412">
    <property type="term" value="P:translation"/>
    <property type="evidence" value="ECO:0007669"/>
    <property type="project" value="UniProtKB-UniRule"/>
</dbReference>
<dbReference type="FunFam" id="3.30.860.10:FF:000001">
    <property type="entry name" value="30S ribosomal protein S19"/>
    <property type="match status" value="1"/>
</dbReference>
<dbReference type="Gene3D" id="3.30.860.10">
    <property type="entry name" value="30s Ribosomal Protein S19, Chain A"/>
    <property type="match status" value="1"/>
</dbReference>
<dbReference type="HAMAP" id="MF_00531">
    <property type="entry name" value="Ribosomal_uS19"/>
    <property type="match status" value="1"/>
</dbReference>
<dbReference type="InterPro" id="IPR002222">
    <property type="entry name" value="Ribosomal_uS19"/>
</dbReference>
<dbReference type="InterPro" id="IPR005732">
    <property type="entry name" value="Ribosomal_uS19_bac-type"/>
</dbReference>
<dbReference type="InterPro" id="IPR020934">
    <property type="entry name" value="Ribosomal_uS19_CS"/>
</dbReference>
<dbReference type="InterPro" id="IPR023575">
    <property type="entry name" value="Ribosomal_uS19_SF"/>
</dbReference>
<dbReference type="NCBIfam" id="TIGR01050">
    <property type="entry name" value="rpsS_bact"/>
    <property type="match status" value="1"/>
</dbReference>
<dbReference type="PANTHER" id="PTHR11880">
    <property type="entry name" value="RIBOSOMAL PROTEIN S19P FAMILY MEMBER"/>
    <property type="match status" value="1"/>
</dbReference>
<dbReference type="PANTHER" id="PTHR11880:SF8">
    <property type="entry name" value="SMALL RIBOSOMAL SUBUNIT PROTEIN US19M"/>
    <property type="match status" value="1"/>
</dbReference>
<dbReference type="Pfam" id="PF00203">
    <property type="entry name" value="Ribosomal_S19"/>
    <property type="match status" value="1"/>
</dbReference>
<dbReference type="PIRSF" id="PIRSF002144">
    <property type="entry name" value="Ribosomal_S19"/>
    <property type="match status" value="1"/>
</dbReference>
<dbReference type="PRINTS" id="PR00975">
    <property type="entry name" value="RIBOSOMALS19"/>
</dbReference>
<dbReference type="SUPFAM" id="SSF54570">
    <property type="entry name" value="Ribosomal protein S19"/>
    <property type="match status" value="1"/>
</dbReference>
<dbReference type="PROSITE" id="PS00323">
    <property type="entry name" value="RIBOSOMAL_S19"/>
    <property type="match status" value="1"/>
</dbReference>
<keyword id="KW-0687">Ribonucleoprotein</keyword>
<keyword id="KW-0689">Ribosomal protein</keyword>
<keyword id="KW-0694">RNA-binding</keyword>
<keyword id="KW-0699">rRNA-binding</keyword>
<comment type="function">
    <text evidence="1">Protein S19 forms a complex with S13 that binds strongly to the 16S ribosomal RNA.</text>
</comment>
<comment type="similarity">
    <text evidence="1">Belongs to the universal ribosomal protein uS19 family.</text>
</comment>
<protein>
    <recommendedName>
        <fullName evidence="1">Small ribosomal subunit protein uS19</fullName>
    </recommendedName>
    <alternativeName>
        <fullName evidence="2">30S ribosomal protein S19</fullName>
    </alternativeName>
</protein>
<evidence type="ECO:0000255" key="1">
    <source>
        <dbReference type="HAMAP-Rule" id="MF_00531"/>
    </source>
</evidence>
<evidence type="ECO:0000305" key="2"/>
<proteinExistence type="inferred from homology"/>
<reference key="1">
    <citation type="journal article" date="2006" name="J. Bacteriol.">
        <title>Pathogenomic sequence analysis of Bacillus cereus and Bacillus thuringiensis isolates closely related to Bacillus anthracis.</title>
        <authorList>
            <person name="Han C.S."/>
            <person name="Xie G."/>
            <person name="Challacombe J.F."/>
            <person name="Altherr M.R."/>
            <person name="Bhotika S.S."/>
            <person name="Bruce D."/>
            <person name="Campbell C.S."/>
            <person name="Campbell M.L."/>
            <person name="Chen J."/>
            <person name="Chertkov O."/>
            <person name="Cleland C."/>
            <person name="Dimitrijevic M."/>
            <person name="Doggett N.A."/>
            <person name="Fawcett J.J."/>
            <person name="Glavina T."/>
            <person name="Goodwin L.A."/>
            <person name="Hill K.K."/>
            <person name="Hitchcock P."/>
            <person name="Jackson P.J."/>
            <person name="Keim P."/>
            <person name="Kewalramani A.R."/>
            <person name="Longmire J."/>
            <person name="Lucas S."/>
            <person name="Malfatti S."/>
            <person name="McMurry K."/>
            <person name="Meincke L.J."/>
            <person name="Misra M."/>
            <person name="Moseman B.L."/>
            <person name="Mundt M."/>
            <person name="Munk A.C."/>
            <person name="Okinaka R.T."/>
            <person name="Parson-Quintana B."/>
            <person name="Reilly L.P."/>
            <person name="Richardson P."/>
            <person name="Robinson D.L."/>
            <person name="Rubin E."/>
            <person name="Saunders E."/>
            <person name="Tapia R."/>
            <person name="Tesmer J.G."/>
            <person name="Thayer N."/>
            <person name="Thompson L.S."/>
            <person name="Tice H."/>
            <person name="Ticknor L.O."/>
            <person name="Wills P.L."/>
            <person name="Brettin T.S."/>
            <person name="Gilna P."/>
        </authorList>
    </citation>
    <scope>NUCLEOTIDE SEQUENCE [LARGE SCALE GENOMIC DNA]</scope>
    <source>
        <strain>ZK / E33L</strain>
    </source>
</reference>
<organism>
    <name type="scientific">Bacillus cereus (strain ZK / E33L)</name>
    <dbReference type="NCBI Taxonomy" id="288681"/>
    <lineage>
        <taxon>Bacteria</taxon>
        <taxon>Bacillati</taxon>
        <taxon>Bacillota</taxon>
        <taxon>Bacilli</taxon>
        <taxon>Bacillales</taxon>
        <taxon>Bacillaceae</taxon>
        <taxon>Bacillus</taxon>
        <taxon>Bacillus cereus group</taxon>
    </lineage>
</organism>